<name>RSMJ_SALG2</name>
<gene>
    <name evidence="1" type="primary">rsmJ</name>
    <name type="synonym">yhiQ</name>
    <name type="ordered locus">SG3844</name>
</gene>
<comment type="function">
    <text evidence="1">Specifically methylates the guanosine in position 1516 of 16S rRNA.</text>
</comment>
<comment type="catalytic activity">
    <reaction evidence="1">
        <text>guanosine(1516) in 16S rRNA + S-adenosyl-L-methionine = N(2)-methylguanosine(1516) in 16S rRNA + S-adenosyl-L-homocysteine + H(+)</text>
        <dbReference type="Rhea" id="RHEA:43220"/>
        <dbReference type="Rhea" id="RHEA-COMP:10412"/>
        <dbReference type="Rhea" id="RHEA-COMP:10413"/>
        <dbReference type="ChEBI" id="CHEBI:15378"/>
        <dbReference type="ChEBI" id="CHEBI:57856"/>
        <dbReference type="ChEBI" id="CHEBI:59789"/>
        <dbReference type="ChEBI" id="CHEBI:74269"/>
        <dbReference type="ChEBI" id="CHEBI:74481"/>
        <dbReference type="EC" id="2.1.1.242"/>
    </reaction>
</comment>
<comment type="subcellular location">
    <subcellularLocation>
        <location evidence="1">Cytoplasm</location>
    </subcellularLocation>
</comment>
<comment type="similarity">
    <text evidence="1">Belongs to the methyltransferase superfamily. RsmJ family.</text>
</comment>
<keyword id="KW-0963">Cytoplasm</keyword>
<keyword id="KW-0489">Methyltransferase</keyword>
<keyword id="KW-0698">rRNA processing</keyword>
<keyword id="KW-0949">S-adenosyl-L-methionine</keyword>
<keyword id="KW-0808">Transferase</keyword>
<feature type="chain" id="PRO_1000198509" description="Ribosomal RNA small subunit methyltransferase J">
    <location>
        <begin position="1"/>
        <end position="252"/>
    </location>
</feature>
<feature type="binding site" evidence="1">
    <location>
        <begin position="101"/>
        <end position="102"/>
    </location>
    <ligand>
        <name>S-adenosyl-L-methionine</name>
        <dbReference type="ChEBI" id="CHEBI:59789"/>
    </ligand>
</feature>
<feature type="binding site" evidence="1">
    <location>
        <begin position="117"/>
        <end position="118"/>
    </location>
    <ligand>
        <name>S-adenosyl-L-methionine</name>
        <dbReference type="ChEBI" id="CHEBI:59789"/>
    </ligand>
</feature>
<feature type="binding site" evidence="1">
    <location>
        <begin position="153"/>
        <end position="154"/>
    </location>
    <ligand>
        <name>S-adenosyl-L-methionine</name>
        <dbReference type="ChEBI" id="CHEBI:59789"/>
    </ligand>
</feature>
<feature type="binding site" evidence="1">
    <location>
        <position position="171"/>
    </location>
    <ligand>
        <name>S-adenosyl-L-methionine</name>
        <dbReference type="ChEBI" id="CHEBI:59789"/>
    </ligand>
</feature>
<evidence type="ECO:0000255" key="1">
    <source>
        <dbReference type="HAMAP-Rule" id="MF_01523"/>
    </source>
</evidence>
<reference key="1">
    <citation type="journal article" date="2008" name="Genome Res.">
        <title>Comparative genome analysis of Salmonella enteritidis PT4 and Salmonella gallinarum 287/91 provides insights into evolutionary and host adaptation pathways.</title>
        <authorList>
            <person name="Thomson N.R."/>
            <person name="Clayton D.J."/>
            <person name="Windhorst D."/>
            <person name="Vernikos G."/>
            <person name="Davidson S."/>
            <person name="Churcher C."/>
            <person name="Quail M.A."/>
            <person name="Stevens M."/>
            <person name="Jones M.A."/>
            <person name="Watson M."/>
            <person name="Barron A."/>
            <person name="Layton A."/>
            <person name="Pickard D."/>
            <person name="Kingsley R.A."/>
            <person name="Bignell A."/>
            <person name="Clark L."/>
            <person name="Harris B."/>
            <person name="Ormond D."/>
            <person name="Abdellah Z."/>
            <person name="Brooks K."/>
            <person name="Cherevach I."/>
            <person name="Chillingworth T."/>
            <person name="Woodward J."/>
            <person name="Norberczak H."/>
            <person name="Lord A."/>
            <person name="Arrowsmith C."/>
            <person name="Jagels K."/>
            <person name="Moule S."/>
            <person name="Mungall K."/>
            <person name="Saunders M."/>
            <person name="Whitehead S."/>
            <person name="Chabalgoity J.A."/>
            <person name="Maskell D."/>
            <person name="Humphreys T."/>
            <person name="Roberts M."/>
            <person name="Barrow P.A."/>
            <person name="Dougan G."/>
            <person name="Parkhill J."/>
        </authorList>
    </citation>
    <scope>NUCLEOTIDE SEQUENCE [LARGE SCALE GENOMIC DNA]</scope>
    <source>
        <strain>287/91 / NCTC 13346</strain>
    </source>
</reference>
<organism>
    <name type="scientific">Salmonella gallinarum (strain 287/91 / NCTC 13346)</name>
    <dbReference type="NCBI Taxonomy" id="550538"/>
    <lineage>
        <taxon>Bacteria</taxon>
        <taxon>Pseudomonadati</taxon>
        <taxon>Pseudomonadota</taxon>
        <taxon>Gammaproteobacteria</taxon>
        <taxon>Enterobacterales</taxon>
        <taxon>Enterobacteriaceae</taxon>
        <taxon>Salmonella</taxon>
    </lineage>
</organism>
<accession>B5RGT3</accession>
<sequence>MQICLMDETGATDGALSVLAARWGLEHDEDNPMALVLTPQHLELRKRDEPKLGGIFVDFVGGAMAHRRKFGGGRGEAVAKAVGIKGDYLPDVVDATAGLGRDAFVLASVGCRVRMLERNPVVAALLDDGLTRGYADADIGGWLQERLQLIHASSLTALTDITPRPQVVYLDPMFPHRQKSALVKKEMRVFQSLVGPDLDADGLLEPARQLATKRVVVKRPDYAPPLADVATPNAIVTKGHRFDIYAGTPLTE</sequence>
<dbReference type="EC" id="2.1.1.242" evidence="1"/>
<dbReference type="EMBL" id="AM933173">
    <property type="protein sequence ID" value="CAR39620.1"/>
    <property type="molecule type" value="Genomic_DNA"/>
</dbReference>
<dbReference type="RefSeq" id="WP_001165127.1">
    <property type="nucleotide sequence ID" value="NC_011274.1"/>
</dbReference>
<dbReference type="SMR" id="B5RGT3"/>
<dbReference type="KEGG" id="seg:SG3844"/>
<dbReference type="HOGENOM" id="CLU_076324_0_0_6"/>
<dbReference type="Proteomes" id="UP000008321">
    <property type="component" value="Chromosome"/>
</dbReference>
<dbReference type="GO" id="GO:0005737">
    <property type="term" value="C:cytoplasm"/>
    <property type="evidence" value="ECO:0007669"/>
    <property type="project" value="UniProtKB-SubCell"/>
</dbReference>
<dbReference type="GO" id="GO:0008990">
    <property type="term" value="F:rRNA (guanine-N2-)-methyltransferase activity"/>
    <property type="evidence" value="ECO:0007669"/>
    <property type="project" value="UniProtKB-UniRule"/>
</dbReference>
<dbReference type="CDD" id="cd02440">
    <property type="entry name" value="AdoMet_MTases"/>
    <property type="match status" value="1"/>
</dbReference>
<dbReference type="FunFam" id="3.40.1630.10:FF:000001">
    <property type="entry name" value="Ribosomal RNA small subunit methyltransferase J"/>
    <property type="match status" value="1"/>
</dbReference>
<dbReference type="FunFam" id="3.40.50.150:FF:000072">
    <property type="entry name" value="Ribosomal RNA small subunit methyltransferase J"/>
    <property type="match status" value="1"/>
</dbReference>
<dbReference type="Gene3D" id="3.40.50.150">
    <property type="entry name" value="Vaccinia Virus protein VP39"/>
    <property type="match status" value="1"/>
</dbReference>
<dbReference type="Gene3D" id="3.40.1630.10">
    <property type="entry name" value="YhiQ-like domain"/>
    <property type="match status" value="1"/>
</dbReference>
<dbReference type="HAMAP" id="MF_01523">
    <property type="entry name" value="16SrRNA_methyltr_J"/>
    <property type="match status" value="1"/>
</dbReference>
<dbReference type="InterPro" id="IPR007536">
    <property type="entry name" value="16SrRNA_methylTrfase_J"/>
</dbReference>
<dbReference type="InterPro" id="IPR029063">
    <property type="entry name" value="SAM-dependent_MTases_sf"/>
</dbReference>
<dbReference type="NCBIfam" id="NF008012">
    <property type="entry name" value="PRK10742.1"/>
    <property type="match status" value="1"/>
</dbReference>
<dbReference type="PANTHER" id="PTHR36112">
    <property type="entry name" value="RIBOSOMAL RNA SMALL SUBUNIT METHYLTRANSFERASE J"/>
    <property type="match status" value="1"/>
</dbReference>
<dbReference type="PANTHER" id="PTHR36112:SF1">
    <property type="entry name" value="RIBOSOMAL RNA SMALL SUBUNIT METHYLTRANSFERASE J"/>
    <property type="match status" value="1"/>
</dbReference>
<dbReference type="Pfam" id="PF04445">
    <property type="entry name" value="SAM_MT"/>
    <property type="match status" value="1"/>
</dbReference>
<dbReference type="SUPFAM" id="SSF53335">
    <property type="entry name" value="S-adenosyl-L-methionine-dependent methyltransferases"/>
    <property type="match status" value="1"/>
</dbReference>
<protein>
    <recommendedName>
        <fullName evidence="1">Ribosomal RNA small subunit methyltransferase J</fullName>
        <ecNumber evidence="1">2.1.1.242</ecNumber>
    </recommendedName>
    <alternativeName>
        <fullName evidence="1">16S rRNA m2G1516 methyltransferase</fullName>
    </alternativeName>
    <alternativeName>
        <fullName evidence="1">rRNA (guanine-N(2)-)-methyltransferase</fullName>
    </alternativeName>
</protein>
<proteinExistence type="inferred from homology"/>